<gene>
    <name evidence="1" type="primary">azoR2</name>
    <name type="ordered locus">PP_4538</name>
</gene>
<protein>
    <recommendedName>
        <fullName evidence="1">FMN-dependent NADH:quinone oxidoreductase 2</fullName>
        <ecNumber evidence="1">1.6.5.-</ecNumber>
    </recommendedName>
    <alternativeName>
        <fullName evidence="1">Azo-dye reductase 2</fullName>
    </alternativeName>
    <alternativeName>
        <fullName evidence="1">FMN-dependent NADH-azo compound oxidoreductase 2</fullName>
    </alternativeName>
    <alternativeName>
        <fullName evidence="1">FMN-dependent NADH-azoreductase 2</fullName>
        <ecNumber evidence="1">1.7.1.17</ecNumber>
    </alternativeName>
</protein>
<sequence>MSRVLIIESSARQQDSVSRQLTKDFIQQWQAAHPADQITVRDLAVSPVPHLDANLLGGWMKPEEQRSAAELEALARSNELTDELLAADVLVMAAPMYNFTIPSTLKAWLDHVLRAGITFKYTPTGPQGLLTGKRAIVLTARGGIHAGASSDHQEPYLRQVMAFIGIHDVDFIHAEGLNMSGEFHEKGVNQAKAKLAAVA</sequence>
<comment type="function">
    <text evidence="1">Quinone reductase that provides resistance to thiol-specific stress caused by electrophilic quinones.</text>
</comment>
<comment type="function">
    <text evidence="1">Also exhibits azoreductase activity. Catalyzes the reductive cleavage of the azo bond in aromatic azo compounds to the corresponding amines.</text>
</comment>
<comment type="catalytic activity">
    <reaction evidence="1">
        <text>2 a quinone + NADH + H(+) = 2 a 1,4-benzosemiquinone + NAD(+)</text>
        <dbReference type="Rhea" id="RHEA:65952"/>
        <dbReference type="ChEBI" id="CHEBI:15378"/>
        <dbReference type="ChEBI" id="CHEBI:57540"/>
        <dbReference type="ChEBI" id="CHEBI:57945"/>
        <dbReference type="ChEBI" id="CHEBI:132124"/>
        <dbReference type="ChEBI" id="CHEBI:134225"/>
    </reaction>
</comment>
<comment type="catalytic activity">
    <reaction evidence="1">
        <text>N,N-dimethyl-1,4-phenylenediamine + anthranilate + 2 NAD(+) = 2-(4-dimethylaminophenyl)diazenylbenzoate + 2 NADH + 2 H(+)</text>
        <dbReference type="Rhea" id="RHEA:55872"/>
        <dbReference type="ChEBI" id="CHEBI:15378"/>
        <dbReference type="ChEBI" id="CHEBI:15783"/>
        <dbReference type="ChEBI" id="CHEBI:16567"/>
        <dbReference type="ChEBI" id="CHEBI:57540"/>
        <dbReference type="ChEBI" id="CHEBI:57945"/>
        <dbReference type="ChEBI" id="CHEBI:71579"/>
        <dbReference type="EC" id="1.7.1.17"/>
    </reaction>
</comment>
<comment type="cofactor">
    <cofactor evidence="1">
        <name>FMN</name>
        <dbReference type="ChEBI" id="CHEBI:58210"/>
    </cofactor>
    <text evidence="1">Binds 1 FMN per subunit.</text>
</comment>
<comment type="subunit">
    <text evidence="1">Homodimer.</text>
</comment>
<comment type="similarity">
    <text evidence="1">Belongs to the azoreductase type 1 family.</text>
</comment>
<organism>
    <name type="scientific">Pseudomonas putida (strain ATCC 47054 / DSM 6125 / CFBP 8728 / NCIMB 11950 / KT2440)</name>
    <dbReference type="NCBI Taxonomy" id="160488"/>
    <lineage>
        <taxon>Bacteria</taxon>
        <taxon>Pseudomonadati</taxon>
        <taxon>Pseudomonadota</taxon>
        <taxon>Gammaproteobacteria</taxon>
        <taxon>Pseudomonadales</taxon>
        <taxon>Pseudomonadaceae</taxon>
        <taxon>Pseudomonas</taxon>
    </lineage>
</organism>
<dbReference type="EC" id="1.6.5.-" evidence="1"/>
<dbReference type="EC" id="1.7.1.17" evidence="1"/>
<dbReference type="EMBL" id="AE015451">
    <property type="protein sequence ID" value="AAN70111.1"/>
    <property type="molecule type" value="Genomic_DNA"/>
</dbReference>
<dbReference type="RefSeq" id="NP_746647.1">
    <property type="nucleotide sequence ID" value="NC_002947.4"/>
</dbReference>
<dbReference type="RefSeq" id="WP_003254608.1">
    <property type="nucleotide sequence ID" value="NZ_CP169744.1"/>
</dbReference>
<dbReference type="SMR" id="Q88EC8"/>
<dbReference type="STRING" id="160488.PP_4538"/>
<dbReference type="PaxDb" id="160488-PP_4538"/>
<dbReference type="KEGG" id="ppu:PP_4538"/>
<dbReference type="PATRIC" id="fig|160488.4.peg.4838"/>
<dbReference type="eggNOG" id="COG1182">
    <property type="taxonomic scope" value="Bacteria"/>
</dbReference>
<dbReference type="HOGENOM" id="CLU_088964_0_0_6"/>
<dbReference type="OrthoDB" id="9787136at2"/>
<dbReference type="PhylomeDB" id="Q88EC8"/>
<dbReference type="BioCyc" id="PPUT160488:G1G01-4845-MONOMER"/>
<dbReference type="Proteomes" id="UP000000556">
    <property type="component" value="Chromosome"/>
</dbReference>
<dbReference type="GO" id="GO:0009055">
    <property type="term" value="F:electron transfer activity"/>
    <property type="evidence" value="ECO:0007669"/>
    <property type="project" value="UniProtKB-UniRule"/>
</dbReference>
<dbReference type="GO" id="GO:0010181">
    <property type="term" value="F:FMN binding"/>
    <property type="evidence" value="ECO:0007669"/>
    <property type="project" value="UniProtKB-UniRule"/>
</dbReference>
<dbReference type="GO" id="GO:0016652">
    <property type="term" value="F:oxidoreductase activity, acting on NAD(P)H as acceptor"/>
    <property type="evidence" value="ECO:0007669"/>
    <property type="project" value="UniProtKB-UniRule"/>
</dbReference>
<dbReference type="GO" id="GO:0016655">
    <property type="term" value="F:oxidoreductase activity, acting on NAD(P)H, quinone or similar compound as acceptor"/>
    <property type="evidence" value="ECO:0007669"/>
    <property type="project" value="InterPro"/>
</dbReference>
<dbReference type="Gene3D" id="3.40.50.360">
    <property type="match status" value="1"/>
</dbReference>
<dbReference type="HAMAP" id="MF_01216">
    <property type="entry name" value="Azoreductase_type1"/>
    <property type="match status" value="1"/>
</dbReference>
<dbReference type="InterPro" id="IPR003680">
    <property type="entry name" value="Flavodoxin_fold"/>
</dbReference>
<dbReference type="InterPro" id="IPR029039">
    <property type="entry name" value="Flavoprotein-like_sf"/>
</dbReference>
<dbReference type="InterPro" id="IPR050104">
    <property type="entry name" value="FMN-dep_NADH:Q_OxRdtase_AzoR1"/>
</dbReference>
<dbReference type="InterPro" id="IPR023048">
    <property type="entry name" value="NADH:quinone_OxRdtase_FMN_depd"/>
</dbReference>
<dbReference type="PANTHER" id="PTHR43741">
    <property type="entry name" value="FMN-DEPENDENT NADH-AZOREDUCTASE 1"/>
    <property type="match status" value="1"/>
</dbReference>
<dbReference type="PANTHER" id="PTHR43741:SF2">
    <property type="entry name" value="FMN-DEPENDENT NADH:QUINONE OXIDOREDUCTASE"/>
    <property type="match status" value="1"/>
</dbReference>
<dbReference type="Pfam" id="PF02525">
    <property type="entry name" value="Flavodoxin_2"/>
    <property type="match status" value="1"/>
</dbReference>
<dbReference type="SUPFAM" id="SSF52218">
    <property type="entry name" value="Flavoproteins"/>
    <property type="match status" value="1"/>
</dbReference>
<keyword id="KW-0285">Flavoprotein</keyword>
<keyword id="KW-0288">FMN</keyword>
<keyword id="KW-0520">NAD</keyword>
<keyword id="KW-0560">Oxidoreductase</keyword>
<keyword id="KW-1185">Reference proteome</keyword>
<proteinExistence type="inferred from homology"/>
<feature type="chain" id="PRO_0000245953" description="FMN-dependent NADH:quinone oxidoreductase 2">
    <location>
        <begin position="1"/>
        <end position="199"/>
    </location>
</feature>
<feature type="binding site" evidence="1">
    <location>
        <position position="10"/>
    </location>
    <ligand>
        <name>FMN</name>
        <dbReference type="ChEBI" id="CHEBI:58210"/>
    </ligand>
</feature>
<feature type="binding site" evidence="1">
    <location>
        <begin position="16"/>
        <end position="18"/>
    </location>
    <ligand>
        <name>FMN</name>
        <dbReference type="ChEBI" id="CHEBI:58210"/>
    </ligand>
</feature>
<feature type="binding site" evidence="1">
    <location>
        <begin position="96"/>
        <end position="99"/>
    </location>
    <ligand>
        <name>FMN</name>
        <dbReference type="ChEBI" id="CHEBI:58210"/>
    </ligand>
</feature>
<accession>Q88EC8</accession>
<name>AZOR2_PSEPK</name>
<reference key="1">
    <citation type="journal article" date="2002" name="Environ. Microbiol.">
        <title>Complete genome sequence and comparative analysis of the metabolically versatile Pseudomonas putida KT2440.</title>
        <authorList>
            <person name="Nelson K.E."/>
            <person name="Weinel C."/>
            <person name="Paulsen I.T."/>
            <person name="Dodson R.J."/>
            <person name="Hilbert H."/>
            <person name="Martins dos Santos V.A.P."/>
            <person name="Fouts D.E."/>
            <person name="Gill S.R."/>
            <person name="Pop M."/>
            <person name="Holmes M."/>
            <person name="Brinkac L.M."/>
            <person name="Beanan M.J."/>
            <person name="DeBoy R.T."/>
            <person name="Daugherty S.C."/>
            <person name="Kolonay J.F."/>
            <person name="Madupu R."/>
            <person name="Nelson W.C."/>
            <person name="White O."/>
            <person name="Peterson J.D."/>
            <person name="Khouri H.M."/>
            <person name="Hance I."/>
            <person name="Chris Lee P."/>
            <person name="Holtzapple E.K."/>
            <person name="Scanlan D."/>
            <person name="Tran K."/>
            <person name="Moazzez A."/>
            <person name="Utterback T.R."/>
            <person name="Rizzo M."/>
            <person name="Lee K."/>
            <person name="Kosack D."/>
            <person name="Moestl D."/>
            <person name="Wedler H."/>
            <person name="Lauber J."/>
            <person name="Stjepandic D."/>
            <person name="Hoheisel J."/>
            <person name="Straetz M."/>
            <person name="Heim S."/>
            <person name="Kiewitz C."/>
            <person name="Eisen J.A."/>
            <person name="Timmis K.N."/>
            <person name="Duesterhoeft A."/>
            <person name="Tuemmler B."/>
            <person name="Fraser C.M."/>
        </authorList>
    </citation>
    <scope>NUCLEOTIDE SEQUENCE [LARGE SCALE GENOMIC DNA]</scope>
    <source>
        <strain>ATCC 47054 / DSM 6125 / CFBP 8728 / NCIMB 11950 / KT2440</strain>
    </source>
</reference>
<evidence type="ECO:0000255" key="1">
    <source>
        <dbReference type="HAMAP-Rule" id="MF_01216"/>
    </source>
</evidence>